<feature type="chain" id="PRO_1000101344" description="Glycine--tRNA ligase beta subunit">
    <location>
        <begin position="1"/>
        <end position="679"/>
    </location>
</feature>
<gene>
    <name evidence="1" type="primary">glyS</name>
    <name type="ordered locus">gbs0260</name>
</gene>
<reference key="1">
    <citation type="journal article" date="2002" name="Mol. Microbiol.">
        <title>Genome sequence of Streptococcus agalactiae, a pathogen causing invasive neonatal disease.</title>
        <authorList>
            <person name="Glaser P."/>
            <person name="Rusniok C."/>
            <person name="Buchrieser C."/>
            <person name="Chevalier F."/>
            <person name="Frangeul L."/>
            <person name="Msadek T."/>
            <person name="Zouine M."/>
            <person name="Couve E."/>
            <person name="Lalioui L."/>
            <person name="Poyart C."/>
            <person name="Trieu-Cuot P."/>
            <person name="Kunst F."/>
        </authorList>
    </citation>
    <scope>NUCLEOTIDE SEQUENCE [LARGE SCALE GENOMIC DNA]</scope>
    <source>
        <strain>NEM316</strain>
    </source>
</reference>
<dbReference type="EC" id="6.1.1.14" evidence="1"/>
<dbReference type="EMBL" id="AL766844">
    <property type="protein sequence ID" value="CAD45905.1"/>
    <property type="molecule type" value="Genomic_DNA"/>
</dbReference>
<dbReference type="RefSeq" id="WP_000159092.1">
    <property type="nucleotide sequence ID" value="NC_004368.1"/>
</dbReference>
<dbReference type="SMR" id="Q8CX30"/>
<dbReference type="KEGG" id="san:glyS"/>
<dbReference type="eggNOG" id="COG0751">
    <property type="taxonomic scope" value="Bacteria"/>
</dbReference>
<dbReference type="HOGENOM" id="CLU_007220_2_2_9"/>
<dbReference type="Proteomes" id="UP000000823">
    <property type="component" value="Chromosome"/>
</dbReference>
<dbReference type="GO" id="GO:0005829">
    <property type="term" value="C:cytosol"/>
    <property type="evidence" value="ECO:0007669"/>
    <property type="project" value="TreeGrafter"/>
</dbReference>
<dbReference type="GO" id="GO:0004814">
    <property type="term" value="F:arginine-tRNA ligase activity"/>
    <property type="evidence" value="ECO:0007669"/>
    <property type="project" value="InterPro"/>
</dbReference>
<dbReference type="GO" id="GO:0005524">
    <property type="term" value="F:ATP binding"/>
    <property type="evidence" value="ECO:0007669"/>
    <property type="project" value="UniProtKB-UniRule"/>
</dbReference>
<dbReference type="GO" id="GO:0004820">
    <property type="term" value="F:glycine-tRNA ligase activity"/>
    <property type="evidence" value="ECO:0007669"/>
    <property type="project" value="UniProtKB-UniRule"/>
</dbReference>
<dbReference type="GO" id="GO:0006420">
    <property type="term" value="P:arginyl-tRNA aminoacylation"/>
    <property type="evidence" value="ECO:0007669"/>
    <property type="project" value="InterPro"/>
</dbReference>
<dbReference type="GO" id="GO:0006426">
    <property type="term" value="P:glycyl-tRNA aminoacylation"/>
    <property type="evidence" value="ECO:0007669"/>
    <property type="project" value="UniProtKB-UniRule"/>
</dbReference>
<dbReference type="HAMAP" id="MF_00255">
    <property type="entry name" value="Gly_tRNA_synth_beta"/>
    <property type="match status" value="1"/>
</dbReference>
<dbReference type="InterPro" id="IPR008909">
    <property type="entry name" value="DALR_anticod-bd"/>
</dbReference>
<dbReference type="InterPro" id="IPR015944">
    <property type="entry name" value="Gly-tRNA-synth_bsu"/>
</dbReference>
<dbReference type="InterPro" id="IPR006194">
    <property type="entry name" value="Gly-tRNA-synth_heterodimer"/>
</dbReference>
<dbReference type="NCBIfam" id="TIGR00211">
    <property type="entry name" value="glyS"/>
    <property type="match status" value="1"/>
</dbReference>
<dbReference type="PANTHER" id="PTHR30075:SF2">
    <property type="entry name" value="GLYCINE--TRNA LIGASE, CHLOROPLASTIC_MITOCHONDRIAL 2"/>
    <property type="match status" value="1"/>
</dbReference>
<dbReference type="PANTHER" id="PTHR30075">
    <property type="entry name" value="GLYCYL-TRNA SYNTHETASE"/>
    <property type="match status" value="1"/>
</dbReference>
<dbReference type="Pfam" id="PF05746">
    <property type="entry name" value="DALR_1"/>
    <property type="match status" value="1"/>
</dbReference>
<dbReference type="Pfam" id="PF02092">
    <property type="entry name" value="tRNA_synt_2f"/>
    <property type="match status" value="1"/>
</dbReference>
<dbReference type="PRINTS" id="PR01045">
    <property type="entry name" value="TRNASYNTHGB"/>
</dbReference>
<dbReference type="SUPFAM" id="SSF109604">
    <property type="entry name" value="HD-domain/PDEase-like"/>
    <property type="match status" value="1"/>
</dbReference>
<dbReference type="PROSITE" id="PS50861">
    <property type="entry name" value="AA_TRNA_LIGASE_II_GLYAB"/>
    <property type="match status" value="1"/>
</dbReference>
<sequence length="679" mass="76610">MTKDLLLELGLEELPAYVVTPSEKQLGQKMVKFLEDHRLSFETVQTFSTPRRLAVRVKGLADQQTDLTEDFKGPSKKIALDAEGNFSKAAQGFVRGKGLSVDDIEFREVKGEEYVYVTKHETGKSAIDVLASVTEVLTELTFPVNMHWANNSFEYIRPVHTLVVLLDDQALELDFLDIHSGRISRGHRFLGSDTEILSASSYEDDLRQQFVIADAKERQQMIVDQIHAIEEKENISVEIDEDLLNEVLNLVEYPTAFLGSFDEKYLDVPEEVLVTSMKNHQRYFVVRDRDGKLLPNFISVRNGNAEHIENVIKGNEKVLVARLEDGEFFWQEDQKLNIADLVEKLKQVTFHEKIGSLYEHMDRVKVISQYLAEKADLSDEEKLAVLRAASIYKFDLLTGMVDEFDELQGIMGEKYALLAGEQPAVAAAIREHYMPTSADGELPETRVGAILALADKFDTLLSFFSVGLIPSGSNDPYALRRATQGIVRILEAFGWDIPLDELVTNLYGLSFASLDYANQKEVMAFISARIEKMIGSKVPKDIREAVLESDTYIVSLILEASQALVQKSKDAQYKVSIESLSRAFNLAEKVTHSVSVDYSLFENNQEKALYQAILSLELTEDMHDNLDKLFALSPIINDFFDNTMVMTDDEKMKQNRLALLNSLVAKARTVAAFNLLNTK</sequence>
<comment type="catalytic activity">
    <reaction evidence="1">
        <text>tRNA(Gly) + glycine + ATP = glycyl-tRNA(Gly) + AMP + diphosphate</text>
        <dbReference type="Rhea" id="RHEA:16013"/>
        <dbReference type="Rhea" id="RHEA-COMP:9664"/>
        <dbReference type="Rhea" id="RHEA-COMP:9683"/>
        <dbReference type="ChEBI" id="CHEBI:30616"/>
        <dbReference type="ChEBI" id="CHEBI:33019"/>
        <dbReference type="ChEBI" id="CHEBI:57305"/>
        <dbReference type="ChEBI" id="CHEBI:78442"/>
        <dbReference type="ChEBI" id="CHEBI:78522"/>
        <dbReference type="ChEBI" id="CHEBI:456215"/>
        <dbReference type="EC" id="6.1.1.14"/>
    </reaction>
</comment>
<comment type="subunit">
    <text evidence="1">Tetramer of two alpha and two beta subunits.</text>
</comment>
<comment type="subcellular location">
    <subcellularLocation>
        <location evidence="1">Cytoplasm</location>
    </subcellularLocation>
</comment>
<comment type="similarity">
    <text evidence="1">Belongs to the class-II aminoacyl-tRNA synthetase family.</text>
</comment>
<accession>Q8CX30</accession>
<evidence type="ECO:0000255" key="1">
    <source>
        <dbReference type="HAMAP-Rule" id="MF_00255"/>
    </source>
</evidence>
<keyword id="KW-0030">Aminoacyl-tRNA synthetase</keyword>
<keyword id="KW-0067">ATP-binding</keyword>
<keyword id="KW-0963">Cytoplasm</keyword>
<keyword id="KW-0436">Ligase</keyword>
<keyword id="KW-0547">Nucleotide-binding</keyword>
<keyword id="KW-0648">Protein biosynthesis</keyword>
<protein>
    <recommendedName>
        <fullName evidence="1">Glycine--tRNA ligase beta subunit</fullName>
        <ecNumber evidence="1">6.1.1.14</ecNumber>
    </recommendedName>
    <alternativeName>
        <fullName evidence="1">Glycyl-tRNA synthetase beta subunit</fullName>
        <shortName evidence="1">GlyRS</shortName>
    </alternativeName>
</protein>
<name>SYGB_STRA3</name>
<proteinExistence type="inferred from homology"/>
<organism>
    <name type="scientific">Streptococcus agalactiae serotype III (strain NEM316)</name>
    <dbReference type="NCBI Taxonomy" id="211110"/>
    <lineage>
        <taxon>Bacteria</taxon>
        <taxon>Bacillati</taxon>
        <taxon>Bacillota</taxon>
        <taxon>Bacilli</taxon>
        <taxon>Lactobacillales</taxon>
        <taxon>Streptococcaceae</taxon>
        <taxon>Streptococcus</taxon>
    </lineage>
</organism>